<feature type="chain" id="PRO_0000194266" description="Probable methylmalonyl-CoA mutase small subunit">
    <location>
        <begin position="1"/>
        <end position="615"/>
    </location>
</feature>
<proteinExistence type="inferred from homology"/>
<dbReference type="EC" id="5.4.99.2"/>
<dbReference type="EMBL" id="LT708304">
    <property type="protein sequence ID" value="SIU00132.1"/>
    <property type="molecule type" value="Genomic_DNA"/>
</dbReference>
<dbReference type="RefSeq" id="NP_855181.1">
    <property type="nucleotide sequence ID" value="NC_002945.3"/>
</dbReference>
<dbReference type="RefSeq" id="WP_003407585.1">
    <property type="nucleotide sequence ID" value="NC_002945.4"/>
</dbReference>
<dbReference type="SMR" id="P65486"/>
<dbReference type="GeneID" id="45425472"/>
<dbReference type="KEGG" id="mbo:BQ2027_MB1529"/>
<dbReference type="PATRIC" id="fig|233413.5.peg.1671"/>
<dbReference type="UniPathway" id="UPA00945">
    <property type="reaction ID" value="UER00910"/>
</dbReference>
<dbReference type="Proteomes" id="UP000001419">
    <property type="component" value="Chromosome"/>
</dbReference>
<dbReference type="GO" id="GO:0031419">
    <property type="term" value="F:cobalamin binding"/>
    <property type="evidence" value="ECO:0007669"/>
    <property type="project" value="UniProtKB-KW"/>
</dbReference>
<dbReference type="GO" id="GO:0046872">
    <property type="term" value="F:metal ion binding"/>
    <property type="evidence" value="ECO:0007669"/>
    <property type="project" value="InterPro"/>
</dbReference>
<dbReference type="GO" id="GO:0004494">
    <property type="term" value="F:methylmalonyl-CoA mutase activity"/>
    <property type="evidence" value="ECO:0007669"/>
    <property type="project" value="UniProtKB-EC"/>
</dbReference>
<dbReference type="GO" id="GO:0019652">
    <property type="term" value="P:lactate fermentation to propionate and acetate"/>
    <property type="evidence" value="ECO:0007669"/>
    <property type="project" value="InterPro"/>
</dbReference>
<dbReference type="CDD" id="cd03677">
    <property type="entry name" value="MM_CoA_mutase_beta"/>
    <property type="match status" value="1"/>
</dbReference>
<dbReference type="Gene3D" id="3.40.50.280">
    <property type="entry name" value="Cobalamin-binding domain"/>
    <property type="match status" value="1"/>
</dbReference>
<dbReference type="Gene3D" id="3.20.20.240">
    <property type="entry name" value="Methylmalonyl-CoA mutase"/>
    <property type="match status" value="1"/>
</dbReference>
<dbReference type="InterPro" id="IPR016176">
    <property type="entry name" value="Cbl-dep_enz_cat"/>
</dbReference>
<dbReference type="InterPro" id="IPR036724">
    <property type="entry name" value="Cobalamin-bd_sf"/>
</dbReference>
<dbReference type="InterPro" id="IPR006099">
    <property type="entry name" value="MeMalonylCoA_mutase_a/b_cat"/>
</dbReference>
<dbReference type="InterPro" id="IPR004608">
    <property type="entry name" value="MMCoA_mutase_b"/>
</dbReference>
<dbReference type="NCBIfam" id="TIGR00642">
    <property type="entry name" value="mmCoA_mut_beta"/>
    <property type="match status" value="1"/>
</dbReference>
<dbReference type="PANTHER" id="PTHR48101:SF1">
    <property type="entry name" value="METHYLMALONYL-COA MUTASE, LARGE SUBUNIT"/>
    <property type="match status" value="1"/>
</dbReference>
<dbReference type="PANTHER" id="PTHR48101">
    <property type="entry name" value="METHYLMALONYL-COA MUTASE, MITOCHONDRIAL-RELATED"/>
    <property type="match status" value="1"/>
</dbReference>
<dbReference type="Pfam" id="PF01642">
    <property type="entry name" value="MM_CoA_mutase"/>
    <property type="match status" value="1"/>
</dbReference>
<dbReference type="SUPFAM" id="SSF52242">
    <property type="entry name" value="Cobalamin (vitamin B12)-binding domain"/>
    <property type="match status" value="1"/>
</dbReference>
<dbReference type="SUPFAM" id="SSF51703">
    <property type="entry name" value="Cobalamin (vitamin B12)-dependent enzymes"/>
    <property type="match status" value="1"/>
</dbReference>
<dbReference type="PROSITE" id="PS00544">
    <property type="entry name" value="METMALONYL_COA_MUTASE"/>
    <property type="match status" value="1"/>
</dbReference>
<comment type="function">
    <text evidence="1">Catalyzes the isomerization of succinyl-CoA to methylmalonyl-CoA during synthesis of propionate from tricarboxylic acid-cycle intermediates.</text>
</comment>
<comment type="catalytic activity">
    <reaction>
        <text>(R)-methylmalonyl-CoA = succinyl-CoA</text>
        <dbReference type="Rhea" id="RHEA:22888"/>
        <dbReference type="ChEBI" id="CHEBI:57292"/>
        <dbReference type="ChEBI" id="CHEBI:57326"/>
        <dbReference type="EC" id="5.4.99.2"/>
    </reaction>
</comment>
<comment type="cofactor">
    <cofactor evidence="1">
        <name>adenosylcob(III)alamin</name>
        <dbReference type="ChEBI" id="CHEBI:18408"/>
    </cofactor>
</comment>
<comment type="pathway">
    <text>Metabolic intermediate metabolism; propanoyl-CoA degradation; succinyl-CoA from propanoyl-CoA: step 3/3.</text>
</comment>
<comment type="subunit">
    <text evidence="1">Heterodimer of an alpha and a beta chain.</text>
</comment>
<comment type="similarity">
    <text evidence="2">Belongs to the methylmalonyl-CoA mutase family.</text>
</comment>
<reference key="1">
    <citation type="journal article" date="2003" name="Proc. Natl. Acad. Sci. U.S.A.">
        <title>The complete genome sequence of Mycobacterium bovis.</title>
        <authorList>
            <person name="Garnier T."/>
            <person name="Eiglmeier K."/>
            <person name="Camus J.-C."/>
            <person name="Medina N."/>
            <person name="Mansoor H."/>
            <person name="Pryor M."/>
            <person name="Duthoy S."/>
            <person name="Grondin S."/>
            <person name="Lacroix C."/>
            <person name="Monsempe C."/>
            <person name="Simon S."/>
            <person name="Harris B."/>
            <person name="Atkin R."/>
            <person name="Doggett J."/>
            <person name="Mayes R."/>
            <person name="Keating L."/>
            <person name="Wheeler P.R."/>
            <person name="Parkhill J."/>
            <person name="Barrell B.G."/>
            <person name="Cole S.T."/>
            <person name="Gordon S.V."/>
            <person name="Hewinson R.G."/>
        </authorList>
    </citation>
    <scope>NUCLEOTIDE SEQUENCE [LARGE SCALE GENOMIC DNA]</scope>
    <source>
        <strain>ATCC BAA-935 / AF2122/97</strain>
    </source>
</reference>
<reference key="2">
    <citation type="journal article" date="2017" name="Genome Announc.">
        <title>Updated reference genome sequence and annotation of Mycobacterium bovis AF2122/97.</title>
        <authorList>
            <person name="Malone K.M."/>
            <person name="Farrell D."/>
            <person name="Stuber T.P."/>
            <person name="Schubert O.T."/>
            <person name="Aebersold R."/>
            <person name="Robbe-Austerman S."/>
            <person name="Gordon S.V."/>
        </authorList>
    </citation>
    <scope>NUCLEOTIDE SEQUENCE [LARGE SCALE GENOMIC DNA]</scope>
    <scope>GENOME REANNOTATION</scope>
    <source>
        <strain>ATCC BAA-935 / AF2122/97</strain>
    </source>
</reference>
<gene>
    <name type="primary">mutA</name>
    <name type="ordered locus">BQ2027_MB1529</name>
</gene>
<organism>
    <name type="scientific">Mycobacterium bovis (strain ATCC BAA-935 / AF2122/97)</name>
    <dbReference type="NCBI Taxonomy" id="233413"/>
    <lineage>
        <taxon>Bacteria</taxon>
        <taxon>Bacillati</taxon>
        <taxon>Actinomycetota</taxon>
        <taxon>Actinomycetes</taxon>
        <taxon>Mycobacteriales</taxon>
        <taxon>Mycobacteriaceae</taxon>
        <taxon>Mycobacterium</taxon>
        <taxon>Mycobacterium tuberculosis complex</taxon>
    </lineage>
</organism>
<sequence length="615" mass="64744">MSIDVPERADLEQVRGRWRNAVAGVLSKSNRTDSAQLGDHPERLLDTQTADGFAIRALYTAFDELPEPPLPGQWPFVRGGDPLRDVHSGWKVAEAFPANGATADTNAAVLAALGEGVSALLIRVGESGVAPDRLTALLSGVYLNLAPVILDAGADYRPACDVMLALVAQLDPGQRDTLSIDLGADPLTASLRDRPAPPIEEVVAVASRAAGERGLRAITVDGPAFHNLGATAATELAATVAAAVAYLRVLTESGLVVSDALRQISFRLAADDDQFMTLAKMRALRQLWARVAEVVGDPGGGAAVVHAETSLPMMTQRDPWVNMLRCTLAAFGAGVGGADTVLVHPFDVAIPGGFPGTAAGFARRIARNTQLLLLEESHVGRVLDPAGGSWFVEELTDRLARRAWQRFQAIEARGGFVEAHDFLAGQIAECAARRADDIAHRRLAITGVNEYPNLGEPALPPGDPTSPVRRYAAGFEALRDRSDHHLARTGARPRVLLLPLGPLAEHNIRTTFATNLLASGGIEAIDPGTVDAGTVGNAVADAGSPSVAVICGTDARYRDEVADIVQAARAAGVSRVYLAGPEKALGDAAHRPDEFLTAKINVVQALSNLLTRLGA</sequence>
<evidence type="ECO:0000250" key="1"/>
<evidence type="ECO:0000305" key="2"/>
<protein>
    <recommendedName>
        <fullName>Probable methylmalonyl-CoA mutase small subunit</fullName>
        <shortName>MCM</shortName>
        <ecNumber>5.4.99.2</ecNumber>
    </recommendedName>
</protein>
<keyword id="KW-0846">Cobalamin</keyword>
<keyword id="KW-0170">Cobalt</keyword>
<keyword id="KW-0413">Isomerase</keyword>
<keyword id="KW-1185">Reference proteome</keyword>
<accession>P65486</accession>
<accession>A0A1R3XYH4</accession>
<accession>P71773</accession>
<accession>X2BHS9</accession>
<name>MUTA_MYCBO</name>